<proteinExistence type="inferred from homology"/>
<keyword id="KW-0251">Elongation factor</keyword>
<keyword id="KW-0496">Mitochondrion</keyword>
<keyword id="KW-0648">Protein biosynthesis</keyword>
<keyword id="KW-1185">Reference proteome</keyword>
<keyword id="KW-0809">Transit peptide</keyword>
<feature type="transit peptide" description="Mitochondrion" evidence="1">
    <location>
        <begin position="1"/>
        <end position="17"/>
    </location>
</feature>
<feature type="chain" id="PRO_0000402343" description="Elongation factor Ts, mitochondrial">
    <location>
        <begin position="18"/>
        <end position="333"/>
    </location>
</feature>
<organism>
    <name type="scientific">Coprinopsis cinerea (strain Okayama-7 / 130 / ATCC MYA-4618 / FGSC 9003)</name>
    <name type="common">Inky cap fungus</name>
    <name type="synonym">Hormographiella aspergillata</name>
    <dbReference type="NCBI Taxonomy" id="240176"/>
    <lineage>
        <taxon>Eukaryota</taxon>
        <taxon>Fungi</taxon>
        <taxon>Dikarya</taxon>
        <taxon>Basidiomycota</taxon>
        <taxon>Agaricomycotina</taxon>
        <taxon>Agaricomycetes</taxon>
        <taxon>Agaricomycetidae</taxon>
        <taxon>Agaricales</taxon>
        <taxon>Agaricineae</taxon>
        <taxon>Psathyrellaceae</taxon>
        <taxon>Coprinopsis</taxon>
    </lineage>
</organism>
<comment type="function">
    <text evidence="1">Associates with the EF-Tu.GDP complex and induces the exchange of GDP to GTP. It remains bound to the aminoacyl-tRNA.EF-Tu.GTP complex up to the GTP hydrolysis stage on the ribosome.</text>
</comment>
<comment type="subcellular location">
    <subcellularLocation>
        <location evidence="1">Mitochondrion</location>
    </subcellularLocation>
</comment>
<comment type="similarity">
    <text evidence="1">Belongs to the EF-Ts family.</text>
</comment>
<reference key="1">
    <citation type="journal article" date="2010" name="Proc. Natl. Acad. Sci. U.S.A.">
        <title>Insights into evolution of multicellular fungi from the assembled chromosomes of the mushroom Coprinopsis cinerea (Coprinus cinereus).</title>
        <authorList>
            <person name="Stajich J.E."/>
            <person name="Wilke S.K."/>
            <person name="Ahren D."/>
            <person name="Au C.H."/>
            <person name="Birren B.W."/>
            <person name="Borodovsky M."/>
            <person name="Burns C."/>
            <person name="Canbaeck B."/>
            <person name="Casselton L.A."/>
            <person name="Cheng C.K."/>
            <person name="Deng J."/>
            <person name="Dietrich F.S."/>
            <person name="Fargo D.C."/>
            <person name="Farman M.L."/>
            <person name="Gathman A.C."/>
            <person name="Goldberg J."/>
            <person name="Guigo R."/>
            <person name="Hoegger P.J."/>
            <person name="Hooker J.B."/>
            <person name="Huggins A."/>
            <person name="James T.Y."/>
            <person name="Kamada T."/>
            <person name="Kilaru S."/>
            <person name="Kodira C."/>
            <person name="Kuees U."/>
            <person name="Kupfer D."/>
            <person name="Kwan H.S."/>
            <person name="Lomsadze A."/>
            <person name="Li W."/>
            <person name="Lilly W.W."/>
            <person name="Ma L.-J."/>
            <person name="Mackey A.J."/>
            <person name="Manning G."/>
            <person name="Martin F."/>
            <person name="Muraguchi H."/>
            <person name="Natvig D.O."/>
            <person name="Palmerini H."/>
            <person name="Ramesh M.A."/>
            <person name="Rehmeyer C.J."/>
            <person name="Roe B.A."/>
            <person name="Shenoy N."/>
            <person name="Stanke M."/>
            <person name="Ter-Hovhannisyan V."/>
            <person name="Tunlid A."/>
            <person name="Velagapudi R."/>
            <person name="Vision T.J."/>
            <person name="Zeng Q."/>
            <person name="Zolan M.E."/>
            <person name="Pukkila P.J."/>
        </authorList>
    </citation>
    <scope>NUCLEOTIDE SEQUENCE [LARGE SCALE GENOMIC DNA]</scope>
    <source>
        <strain>Okayama-7 / 130 / ATCC MYA-4618 / FGSC 9003</strain>
    </source>
</reference>
<evidence type="ECO:0000255" key="1">
    <source>
        <dbReference type="HAMAP-Rule" id="MF_03135"/>
    </source>
</evidence>
<gene>
    <name evidence="1" type="primary">TSF1</name>
    <name type="ORF">CC1G_06571</name>
</gene>
<dbReference type="EMBL" id="AACS02000001">
    <property type="protein sequence ID" value="EAU92560.1"/>
    <property type="molecule type" value="Genomic_DNA"/>
</dbReference>
<dbReference type="RefSeq" id="XP_001829234.1">
    <property type="nucleotide sequence ID" value="XM_001829182.1"/>
</dbReference>
<dbReference type="SMR" id="A8N2Z9"/>
<dbReference type="FunCoup" id="A8N2Z9">
    <property type="interactions" value="278"/>
</dbReference>
<dbReference type="STRING" id="240176.A8N2Z9"/>
<dbReference type="GeneID" id="6005661"/>
<dbReference type="KEGG" id="cci:CC1G_06571"/>
<dbReference type="VEuPathDB" id="FungiDB:CC1G_06571"/>
<dbReference type="eggNOG" id="KOG1071">
    <property type="taxonomic scope" value="Eukaryota"/>
</dbReference>
<dbReference type="HOGENOM" id="CLU_047155_4_1_1"/>
<dbReference type="InParanoid" id="A8N2Z9"/>
<dbReference type="OMA" id="FAKWTVG"/>
<dbReference type="OrthoDB" id="277235at2759"/>
<dbReference type="Proteomes" id="UP000001861">
    <property type="component" value="Unassembled WGS sequence"/>
</dbReference>
<dbReference type="GO" id="GO:0005739">
    <property type="term" value="C:mitochondrion"/>
    <property type="evidence" value="ECO:0007669"/>
    <property type="project" value="UniProtKB-SubCell"/>
</dbReference>
<dbReference type="GO" id="GO:0003746">
    <property type="term" value="F:translation elongation factor activity"/>
    <property type="evidence" value="ECO:0007669"/>
    <property type="project" value="UniProtKB-UniRule"/>
</dbReference>
<dbReference type="GO" id="GO:0070125">
    <property type="term" value="P:mitochondrial translational elongation"/>
    <property type="evidence" value="ECO:0007669"/>
    <property type="project" value="TreeGrafter"/>
</dbReference>
<dbReference type="CDD" id="cd14275">
    <property type="entry name" value="UBA_EF-Ts"/>
    <property type="match status" value="1"/>
</dbReference>
<dbReference type="Gene3D" id="1.10.8.10">
    <property type="entry name" value="DNA helicase RuvA subunit, C-terminal domain"/>
    <property type="match status" value="1"/>
</dbReference>
<dbReference type="Gene3D" id="3.30.479.20">
    <property type="entry name" value="Elongation factor Ts, dimerisation domain"/>
    <property type="match status" value="2"/>
</dbReference>
<dbReference type="HAMAP" id="MF_00050">
    <property type="entry name" value="EF_Ts"/>
    <property type="match status" value="1"/>
</dbReference>
<dbReference type="InterPro" id="IPR036402">
    <property type="entry name" value="EF-Ts_dimer_sf"/>
</dbReference>
<dbReference type="InterPro" id="IPR001816">
    <property type="entry name" value="Transl_elong_EFTs/EF1B"/>
</dbReference>
<dbReference type="InterPro" id="IPR014039">
    <property type="entry name" value="Transl_elong_EFTs/EF1B_dimer"/>
</dbReference>
<dbReference type="InterPro" id="IPR009060">
    <property type="entry name" value="UBA-like_sf"/>
</dbReference>
<dbReference type="PANTHER" id="PTHR11741">
    <property type="entry name" value="ELONGATION FACTOR TS"/>
    <property type="match status" value="1"/>
</dbReference>
<dbReference type="PANTHER" id="PTHR11741:SF0">
    <property type="entry name" value="ELONGATION FACTOR TS, MITOCHONDRIAL"/>
    <property type="match status" value="1"/>
</dbReference>
<dbReference type="Pfam" id="PF00889">
    <property type="entry name" value="EF_TS"/>
    <property type="match status" value="1"/>
</dbReference>
<dbReference type="SUPFAM" id="SSF54713">
    <property type="entry name" value="Elongation factor Ts (EF-Ts), dimerisation domain"/>
    <property type="match status" value="1"/>
</dbReference>
<dbReference type="SUPFAM" id="SSF46934">
    <property type="entry name" value="UBA-like"/>
    <property type="match status" value="1"/>
</dbReference>
<sequence>MLRTLRPTLPSRCLRLYSTAPEKPSLKLVAELRKRTEVSIVKAREALSASNNDIEAALQWLAKDLETTGAKKAAKVGGRTTNEGLVSVSILSNFTASGLQRGIRAAMIELNCETDFVGRNELFGRLAGDIAHTAAVVAEPGASVFQNLSLEFLQEAPLVSRSDPTSAPSGTVATTIRDTIAKVGENITLRRALVVAAEPPAADAAQALRLGQYVHGTIHQPTEGRIGTLALLGLKYPSPKGFTQETTEKLASLERALARQIVGFPTQSIKGSEETALYSQPFMMLPGELNSRPVGEALQAWSVQQGIVGSEGDAGAVEVLEFAKWSVGEPLES</sequence>
<name>EFTS_COPC7</name>
<accession>A8N2Z9</accession>
<protein>
    <recommendedName>
        <fullName evidence="1">Elongation factor Ts, mitochondrial</fullName>
        <shortName evidence="1">EF-Ts</shortName>
        <shortName evidence="1">EF-TsMt</shortName>
    </recommendedName>
</protein>